<evidence type="ECO:0000255" key="1">
    <source>
        <dbReference type="HAMAP-Rule" id="MF_01844"/>
    </source>
</evidence>
<gene>
    <name evidence="1" type="primary">nhaA2</name>
    <name type="ordered locus">CJJ81176_1646</name>
</gene>
<keyword id="KW-0050">Antiport</keyword>
<keyword id="KW-0997">Cell inner membrane</keyword>
<keyword id="KW-1003">Cell membrane</keyword>
<keyword id="KW-0406">Ion transport</keyword>
<keyword id="KW-0472">Membrane</keyword>
<keyword id="KW-0915">Sodium</keyword>
<keyword id="KW-0739">Sodium transport</keyword>
<keyword id="KW-0812">Transmembrane</keyword>
<keyword id="KW-1133">Transmembrane helix</keyword>
<keyword id="KW-0813">Transport</keyword>
<feature type="chain" id="PRO_0000334262" description="Na(+)/H(+) antiporter NhaA 2">
    <location>
        <begin position="1"/>
        <end position="382"/>
    </location>
</feature>
<feature type="transmembrane region" description="Helical" evidence="1">
    <location>
        <begin position="7"/>
        <end position="27"/>
    </location>
</feature>
<feature type="transmembrane region" description="Helical" evidence="1">
    <location>
        <begin position="58"/>
        <end position="78"/>
    </location>
</feature>
<feature type="transmembrane region" description="Helical" evidence="1">
    <location>
        <begin position="94"/>
        <end position="114"/>
    </location>
</feature>
<feature type="transmembrane region" description="Helical" evidence="1">
    <location>
        <begin position="124"/>
        <end position="144"/>
    </location>
</feature>
<feature type="transmembrane region" description="Helical" evidence="1">
    <location>
        <begin position="153"/>
        <end position="173"/>
    </location>
</feature>
<feature type="transmembrane region" description="Helical" evidence="1">
    <location>
        <begin position="178"/>
        <end position="198"/>
    </location>
</feature>
<feature type="transmembrane region" description="Helical" evidence="1">
    <location>
        <begin position="199"/>
        <end position="219"/>
    </location>
</feature>
<feature type="transmembrane region" description="Helical" evidence="1">
    <location>
        <begin position="255"/>
        <end position="275"/>
    </location>
</feature>
<feature type="transmembrane region" description="Helical" evidence="1">
    <location>
        <begin position="291"/>
        <end position="311"/>
    </location>
</feature>
<feature type="transmembrane region" description="Helical" evidence="1">
    <location>
        <begin position="327"/>
        <end position="347"/>
    </location>
</feature>
<feature type="transmembrane region" description="Helical" evidence="1">
    <location>
        <begin position="361"/>
        <end position="381"/>
    </location>
</feature>
<sequence length="382" mass="42351">MQMIKKMVLSETFPGILLIFFTFLALLCKNSSLSVIYTDFFHANFTVGFDHFQISKSLDLWINDGLIAIFFLCIGLELKYEILRGQLKNIRAVSLPIFGALGGMITPALIFAAINYSHDFAMKGWAIPTATDIAFAVGILMLLGNKIPTSLKLFLLSLAIFDDLGAIVIIALFYTDQLSALAIIICLFCIFALLLLNYYHITHLSLYVLVGVVLWIAMLKSGVHATLAGVIISLFIPLDTKNKKPYLHEVLKDLNPWVVYFILPLFAFANAGIDIRDMHLGSVFSPVSLGIILGLFLGKQLGVFTFCFIAIKLKLAKLPENIKYGKFYGICILTGIGFTMSLFIDGLAYKNSDIFEHADKLAILIASFLSAIVGFIYLKIVK</sequence>
<accession>A1W1Q7</accession>
<comment type="function">
    <text evidence="1">Na(+)/H(+) antiporter that extrudes sodium in exchange for external protons.</text>
</comment>
<comment type="catalytic activity">
    <reaction evidence="1">
        <text>Na(+)(in) + 2 H(+)(out) = Na(+)(out) + 2 H(+)(in)</text>
        <dbReference type="Rhea" id="RHEA:29251"/>
        <dbReference type="ChEBI" id="CHEBI:15378"/>
        <dbReference type="ChEBI" id="CHEBI:29101"/>
    </reaction>
    <physiologicalReaction direction="left-to-right" evidence="1">
        <dbReference type="Rhea" id="RHEA:29252"/>
    </physiologicalReaction>
</comment>
<comment type="subcellular location">
    <subcellularLocation>
        <location evidence="1">Cell inner membrane</location>
        <topology evidence="1">Multi-pass membrane protein</topology>
    </subcellularLocation>
</comment>
<comment type="similarity">
    <text evidence="1">Belongs to the NhaA Na(+)/H(+) (TC 2.A.33) antiporter family.</text>
</comment>
<proteinExistence type="inferred from homology"/>
<name>NHAA2_CAMJJ</name>
<protein>
    <recommendedName>
        <fullName evidence="1">Na(+)/H(+) antiporter NhaA 2</fullName>
    </recommendedName>
    <alternativeName>
        <fullName evidence="1">Sodium/proton antiporter NhaA 2</fullName>
    </alternativeName>
</protein>
<dbReference type="EMBL" id="CP000538">
    <property type="protein sequence ID" value="EAQ72522.1"/>
    <property type="molecule type" value="Genomic_DNA"/>
</dbReference>
<dbReference type="SMR" id="A1W1Q7"/>
<dbReference type="KEGG" id="cjj:CJJ81176_1646"/>
<dbReference type="eggNOG" id="COG3004">
    <property type="taxonomic scope" value="Bacteria"/>
</dbReference>
<dbReference type="HOGENOM" id="CLU_015803_1_0_7"/>
<dbReference type="Proteomes" id="UP000000646">
    <property type="component" value="Chromosome"/>
</dbReference>
<dbReference type="GO" id="GO:0005886">
    <property type="term" value="C:plasma membrane"/>
    <property type="evidence" value="ECO:0007669"/>
    <property type="project" value="UniProtKB-SubCell"/>
</dbReference>
<dbReference type="GO" id="GO:0015385">
    <property type="term" value="F:sodium:proton antiporter activity"/>
    <property type="evidence" value="ECO:0007669"/>
    <property type="project" value="TreeGrafter"/>
</dbReference>
<dbReference type="GO" id="GO:0006885">
    <property type="term" value="P:regulation of pH"/>
    <property type="evidence" value="ECO:0007669"/>
    <property type="project" value="InterPro"/>
</dbReference>
<dbReference type="Gene3D" id="1.20.1530.10">
    <property type="entry name" value="Na+/H+ antiporter like domain"/>
    <property type="match status" value="1"/>
</dbReference>
<dbReference type="HAMAP" id="MF_01844">
    <property type="entry name" value="NhaA"/>
    <property type="match status" value="1"/>
</dbReference>
<dbReference type="InterPro" id="IPR023171">
    <property type="entry name" value="Na/H_antiporter_dom_sf"/>
</dbReference>
<dbReference type="InterPro" id="IPR004670">
    <property type="entry name" value="NhaA"/>
</dbReference>
<dbReference type="NCBIfam" id="TIGR00773">
    <property type="entry name" value="NhaA"/>
    <property type="match status" value="1"/>
</dbReference>
<dbReference type="NCBIfam" id="NF007111">
    <property type="entry name" value="PRK09560.1"/>
    <property type="match status" value="1"/>
</dbReference>
<dbReference type="NCBIfam" id="NF007112">
    <property type="entry name" value="PRK09561.1"/>
    <property type="match status" value="1"/>
</dbReference>
<dbReference type="PANTHER" id="PTHR30341:SF0">
    <property type="entry name" value="NA(+)_H(+) ANTIPORTER NHAA"/>
    <property type="match status" value="1"/>
</dbReference>
<dbReference type="PANTHER" id="PTHR30341">
    <property type="entry name" value="SODIUM ION/PROTON ANTIPORTER NHAA-RELATED"/>
    <property type="match status" value="1"/>
</dbReference>
<dbReference type="Pfam" id="PF06965">
    <property type="entry name" value="Na_H_antiport_1"/>
    <property type="match status" value="1"/>
</dbReference>
<organism>
    <name type="scientific">Campylobacter jejuni subsp. jejuni serotype O:23/36 (strain 81-176)</name>
    <dbReference type="NCBI Taxonomy" id="354242"/>
    <lineage>
        <taxon>Bacteria</taxon>
        <taxon>Pseudomonadati</taxon>
        <taxon>Campylobacterota</taxon>
        <taxon>Epsilonproteobacteria</taxon>
        <taxon>Campylobacterales</taxon>
        <taxon>Campylobacteraceae</taxon>
        <taxon>Campylobacter</taxon>
    </lineage>
</organism>
<reference key="1">
    <citation type="submission" date="2006-12" db="EMBL/GenBank/DDBJ databases">
        <authorList>
            <person name="Fouts D.E."/>
            <person name="Nelson K.E."/>
            <person name="Sebastian Y."/>
        </authorList>
    </citation>
    <scope>NUCLEOTIDE SEQUENCE [LARGE SCALE GENOMIC DNA]</scope>
    <source>
        <strain>81-176</strain>
    </source>
</reference>